<organism>
    <name type="scientific">Pseudotsuga japonica</name>
    <name type="common">Japanese douglas-fir</name>
    <name type="synonym">Tsuga japonica</name>
    <dbReference type="NCBI Taxonomy" id="25593"/>
    <lineage>
        <taxon>Eukaryota</taxon>
        <taxon>Viridiplantae</taxon>
        <taxon>Streptophyta</taxon>
        <taxon>Embryophyta</taxon>
        <taxon>Tracheophyta</taxon>
        <taxon>Spermatophyta</taxon>
        <taxon>Pinopsida</taxon>
        <taxon>Pinidae</taxon>
        <taxon>Conifers I</taxon>
        <taxon>Pinales</taxon>
        <taxon>Pinaceae</taxon>
        <taxon>Pseudotsuga</taxon>
    </lineage>
</organism>
<feature type="chain" id="PRO_0000219648" description="Photosystem II reaction center protein I">
    <location>
        <begin position="1"/>
        <end position="36"/>
    </location>
</feature>
<feature type="transmembrane region" description="Helical" evidence="1">
    <location>
        <begin position="4"/>
        <end position="24"/>
    </location>
</feature>
<protein>
    <recommendedName>
        <fullName evidence="1">Photosystem II reaction center protein I</fullName>
        <shortName evidence="1">PSII-I</shortName>
    </recommendedName>
    <alternativeName>
        <fullName evidence="1">PSII 4.8 kDa protein</fullName>
    </alternativeName>
</protein>
<comment type="function">
    <text evidence="1">One of the components of the core complex of photosystem II (PSII), required for its stability and/or assembly. PSII is a light-driven water:plastoquinone oxidoreductase that uses light energy to abstract electrons from H(2)O, generating O(2) and a proton gradient subsequently used for ATP formation. It consists of a core antenna complex that captures photons, and an electron transfer chain that converts photonic excitation into a charge separation.</text>
</comment>
<comment type="subunit">
    <text evidence="1">PSII is composed of 1 copy each of membrane proteins PsbA, PsbB, PsbC, PsbD, PsbE, PsbF, PsbH, PsbI, PsbJ, PsbK, PsbL, PsbM, PsbT, PsbX, PsbY, PsbZ, Psb30/Ycf12, at least 3 peripheral proteins of the oxygen-evolving complex and a large number of cofactors. It forms dimeric complexes.</text>
</comment>
<comment type="subcellular location">
    <subcellularLocation>
        <location evidence="1">Plastid</location>
        <location evidence="1">Chloroplast thylakoid membrane</location>
        <topology evidence="1">Single-pass membrane protein</topology>
    </subcellularLocation>
</comment>
<comment type="similarity">
    <text evidence="1">Belongs to the PsbI family.</text>
</comment>
<proteinExistence type="inferred from homology"/>
<geneLocation type="chloroplast"/>
<sequence>MLTLKLFVYAVVIFFISLFIFGFLSNDPGRNPGRKE</sequence>
<accession>P69558</accession>
<accession>P29796</accession>
<keyword id="KW-0150">Chloroplast</keyword>
<keyword id="KW-0472">Membrane</keyword>
<keyword id="KW-0602">Photosynthesis</keyword>
<keyword id="KW-0604">Photosystem II</keyword>
<keyword id="KW-0934">Plastid</keyword>
<keyword id="KW-0674">Reaction center</keyword>
<keyword id="KW-0793">Thylakoid</keyword>
<keyword id="KW-0812">Transmembrane</keyword>
<keyword id="KW-1133">Transmembrane helix</keyword>
<evidence type="ECO:0000255" key="1">
    <source>
        <dbReference type="HAMAP-Rule" id="MF_01316"/>
    </source>
</evidence>
<name>PSBI_PSEJA</name>
<dbReference type="EMBL" id="L20418">
    <property type="protein sequence ID" value="AAB01441.1"/>
    <property type="molecule type" value="Genomic_DNA"/>
</dbReference>
<dbReference type="PIR" id="S60133">
    <property type="entry name" value="S60133"/>
</dbReference>
<dbReference type="SMR" id="P69558"/>
<dbReference type="GO" id="GO:0009535">
    <property type="term" value="C:chloroplast thylakoid membrane"/>
    <property type="evidence" value="ECO:0007669"/>
    <property type="project" value="UniProtKB-SubCell"/>
</dbReference>
<dbReference type="GO" id="GO:0009539">
    <property type="term" value="C:photosystem II reaction center"/>
    <property type="evidence" value="ECO:0007669"/>
    <property type="project" value="InterPro"/>
</dbReference>
<dbReference type="GO" id="GO:0015979">
    <property type="term" value="P:photosynthesis"/>
    <property type="evidence" value="ECO:0007669"/>
    <property type="project" value="UniProtKB-UniRule"/>
</dbReference>
<dbReference type="HAMAP" id="MF_01316">
    <property type="entry name" value="PSII_PsbI"/>
    <property type="match status" value="1"/>
</dbReference>
<dbReference type="InterPro" id="IPR003686">
    <property type="entry name" value="PSII_PsbI"/>
</dbReference>
<dbReference type="InterPro" id="IPR037271">
    <property type="entry name" value="PSII_PsbI_sf"/>
</dbReference>
<dbReference type="NCBIfam" id="NF002735">
    <property type="entry name" value="PRK02655.1"/>
    <property type="match status" value="1"/>
</dbReference>
<dbReference type="PANTHER" id="PTHR35772">
    <property type="entry name" value="PHOTOSYSTEM II REACTION CENTER PROTEIN I"/>
    <property type="match status" value="1"/>
</dbReference>
<dbReference type="PANTHER" id="PTHR35772:SF1">
    <property type="entry name" value="PHOTOSYSTEM II REACTION CENTER PROTEIN I"/>
    <property type="match status" value="1"/>
</dbReference>
<dbReference type="Pfam" id="PF02532">
    <property type="entry name" value="PsbI"/>
    <property type="match status" value="1"/>
</dbReference>
<dbReference type="SUPFAM" id="SSF161041">
    <property type="entry name" value="Photosystem II reaction center protein I, PsbI"/>
    <property type="match status" value="1"/>
</dbReference>
<gene>
    <name evidence="1" type="primary">psbI</name>
</gene>
<reference key="1">
    <citation type="journal article" date="1995" name="Curr. Genet.">
        <title>A mutation hotspot in the chloroplast genome of a conifer (Douglas-fir: Pseudotsuga) is caused by variability in the number of direct repeats derived from a partially duplicated tRNA gene.</title>
        <authorList>
            <person name="Hipkins V.D."/>
            <person name="Marshall K.A."/>
            <person name="Neale D.B."/>
            <person name="Rottmann W.H."/>
            <person name="Strauss S.H."/>
        </authorList>
    </citation>
    <scope>NUCLEOTIDE SEQUENCE [GENOMIC DNA]</scope>
</reference>